<name>NUOB_FRATW</name>
<evidence type="ECO:0000255" key="1">
    <source>
        <dbReference type="HAMAP-Rule" id="MF_01356"/>
    </source>
</evidence>
<gene>
    <name evidence="1" type="primary">nuoB</name>
    <name type="ordered locus">FTW_0107</name>
</gene>
<dbReference type="EC" id="7.1.1.-" evidence="1"/>
<dbReference type="EMBL" id="CP000608">
    <property type="protein sequence ID" value="ABO46095.1"/>
    <property type="molecule type" value="Genomic_DNA"/>
</dbReference>
<dbReference type="RefSeq" id="WP_003017394.1">
    <property type="nucleotide sequence ID" value="NC_009257.1"/>
</dbReference>
<dbReference type="SMR" id="A4IVZ3"/>
<dbReference type="KEGG" id="ftw:FTW_0107"/>
<dbReference type="HOGENOM" id="CLU_055737_7_3_6"/>
<dbReference type="GO" id="GO:0005886">
    <property type="term" value="C:plasma membrane"/>
    <property type="evidence" value="ECO:0007669"/>
    <property type="project" value="UniProtKB-SubCell"/>
</dbReference>
<dbReference type="GO" id="GO:0045271">
    <property type="term" value="C:respiratory chain complex I"/>
    <property type="evidence" value="ECO:0007669"/>
    <property type="project" value="TreeGrafter"/>
</dbReference>
<dbReference type="GO" id="GO:0051539">
    <property type="term" value="F:4 iron, 4 sulfur cluster binding"/>
    <property type="evidence" value="ECO:0007669"/>
    <property type="project" value="UniProtKB-KW"/>
</dbReference>
<dbReference type="GO" id="GO:0005506">
    <property type="term" value="F:iron ion binding"/>
    <property type="evidence" value="ECO:0007669"/>
    <property type="project" value="UniProtKB-UniRule"/>
</dbReference>
<dbReference type="GO" id="GO:0008137">
    <property type="term" value="F:NADH dehydrogenase (ubiquinone) activity"/>
    <property type="evidence" value="ECO:0007669"/>
    <property type="project" value="InterPro"/>
</dbReference>
<dbReference type="GO" id="GO:0050136">
    <property type="term" value="F:NADH:ubiquinone reductase (non-electrogenic) activity"/>
    <property type="evidence" value="ECO:0007669"/>
    <property type="project" value="UniProtKB-UniRule"/>
</dbReference>
<dbReference type="GO" id="GO:0048038">
    <property type="term" value="F:quinone binding"/>
    <property type="evidence" value="ECO:0007669"/>
    <property type="project" value="UniProtKB-KW"/>
</dbReference>
<dbReference type="GO" id="GO:0009060">
    <property type="term" value="P:aerobic respiration"/>
    <property type="evidence" value="ECO:0007669"/>
    <property type="project" value="TreeGrafter"/>
</dbReference>
<dbReference type="GO" id="GO:0015990">
    <property type="term" value="P:electron transport coupled proton transport"/>
    <property type="evidence" value="ECO:0007669"/>
    <property type="project" value="TreeGrafter"/>
</dbReference>
<dbReference type="FunFam" id="3.40.50.12280:FF:000001">
    <property type="entry name" value="NADH-quinone oxidoreductase subunit B 2"/>
    <property type="match status" value="1"/>
</dbReference>
<dbReference type="Gene3D" id="3.40.50.12280">
    <property type="match status" value="1"/>
</dbReference>
<dbReference type="HAMAP" id="MF_01356">
    <property type="entry name" value="NDH1_NuoB"/>
    <property type="match status" value="1"/>
</dbReference>
<dbReference type="InterPro" id="IPR006137">
    <property type="entry name" value="NADH_UbQ_OxRdtase-like_20kDa"/>
</dbReference>
<dbReference type="InterPro" id="IPR006138">
    <property type="entry name" value="NADH_UQ_OxRdtase_20Kd_su"/>
</dbReference>
<dbReference type="NCBIfam" id="TIGR01957">
    <property type="entry name" value="nuoB_fam"/>
    <property type="match status" value="1"/>
</dbReference>
<dbReference type="NCBIfam" id="NF005012">
    <property type="entry name" value="PRK06411.1"/>
    <property type="match status" value="1"/>
</dbReference>
<dbReference type="PANTHER" id="PTHR11995">
    <property type="entry name" value="NADH DEHYDROGENASE"/>
    <property type="match status" value="1"/>
</dbReference>
<dbReference type="PANTHER" id="PTHR11995:SF14">
    <property type="entry name" value="NADH DEHYDROGENASE [UBIQUINONE] IRON-SULFUR PROTEIN 7, MITOCHONDRIAL"/>
    <property type="match status" value="1"/>
</dbReference>
<dbReference type="Pfam" id="PF01058">
    <property type="entry name" value="Oxidored_q6"/>
    <property type="match status" value="1"/>
</dbReference>
<dbReference type="SUPFAM" id="SSF56770">
    <property type="entry name" value="HydA/Nqo6-like"/>
    <property type="match status" value="1"/>
</dbReference>
<dbReference type="PROSITE" id="PS01150">
    <property type="entry name" value="COMPLEX1_20K"/>
    <property type="match status" value="1"/>
</dbReference>
<reference key="1">
    <citation type="journal article" date="2007" name="PLoS ONE">
        <title>Complete genomic characterization of a pathogenic A.II strain of Francisella tularensis subspecies tularensis.</title>
        <authorList>
            <person name="Beckstrom-Sternberg S.M."/>
            <person name="Auerbach R.K."/>
            <person name="Godbole S."/>
            <person name="Pearson J.V."/>
            <person name="Beckstrom-Sternberg J.S."/>
            <person name="Deng Z."/>
            <person name="Munk C."/>
            <person name="Kubota K."/>
            <person name="Zhou Y."/>
            <person name="Bruce D."/>
            <person name="Noronha J."/>
            <person name="Scheuermann R.H."/>
            <person name="Wang A."/>
            <person name="Wei X."/>
            <person name="Wang J."/>
            <person name="Hao J."/>
            <person name="Wagner D.M."/>
            <person name="Brettin T.S."/>
            <person name="Brown N."/>
            <person name="Gilna P."/>
            <person name="Keim P.S."/>
        </authorList>
    </citation>
    <scope>NUCLEOTIDE SEQUENCE [LARGE SCALE GENOMIC DNA]</scope>
    <source>
        <strain>WY96-3418</strain>
    </source>
</reference>
<accession>A4IVZ3</accession>
<protein>
    <recommendedName>
        <fullName evidence="1">NADH-quinone oxidoreductase subunit B</fullName>
        <ecNumber evidence="1">7.1.1.-</ecNumber>
    </recommendedName>
    <alternativeName>
        <fullName evidence="1">NADH dehydrogenase I subunit B</fullName>
    </alternativeName>
    <alternativeName>
        <fullName evidence="1">NDH-1 subunit B</fullName>
    </alternativeName>
</protein>
<feature type="chain" id="PRO_0000376232" description="NADH-quinone oxidoreductase subunit B">
    <location>
        <begin position="1"/>
        <end position="158"/>
    </location>
</feature>
<feature type="binding site" evidence="1">
    <location>
        <position position="36"/>
    </location>
    <ligand>
        <name>[4Fe-4S] cluster</name>
        <dbReference type="ChEBI" id="CHEBI:49883"/>
    </ligand>
</feature>
<feature type="binding site" evidence="1">
    <location>
        <position position="37"/>
    </location>
    <ligand>
        <name>[4Fe-4S] cluster</name>
        <dbReference type="ChEBI" id="CHEBI:49883"/>
    </ligand>
</feature>
<feature type="binding site" evidence="1">
    <location>
        <position position="101"/>
    </location>
    <ligand>
        <name>[4Fe-4S] cluster</name>
        <dbReference type="ChEBI" id="CHEBI:49883"/>
    </ligand>
</feature>
<feature type="binding site" evidence="1">
    <location>
        <position position="131"/>
    </location>
    <ligand>
        <name>[4Fe-4S] cluster</name>
        <dbReference type="ChEBI" id="CHEBI:49883"/>
    </ligand>
</feature>
<organism>
    <name type="scientific">Francisella tularensis subsp. tularensis (strain WY96-3418)</name>
    <dbReference type="NCBI Taxonomy" id="418136"/>
    <lineage>
        <taxon>Bacteria</taxon>
        <taxon>Pseudomonadati</taxon>
        <taxon>Pseudomonadota</taxon>
        <taxon>Gammaproteobacteria</taxon>
        <taxon>Thiotrichales</taxon>
        <taxon>Francisellaceae</taxon>
        <taxon>Francisella</taxon>
    </lineage>
</organism>
<proteinExistence type="inferred from homology"/>
<keyword id="KW-0004">4Fe-4S</keyword>
<keyword id="KW-0997">Cell inner membrane</keyword>
<keyword id="KW-1003">Cell membrane</keyword>
<keyword id="KW-0408">Iron</keyword>
<keyword id="KW-0411">Iron-sulfur</keyword>
<keyword id="KW-0472">Membrane</keyword>
<keyword id="KW-0479">Metal-binding</keyword>
<keyword id="KW-0520">NAD</keyword>
<keyword id="KW-0874">Quinone</keyword>
<keyword id="KW-1278">Translocase</keyword>
<keyword id="KW-0813">Transport</keyword>
<keyword id="KW-0830">Ubiquinone</keyword>
<comment type="function">
    <text evidence="1">NDH-1 shuttles electrons from NADH, via FMN and iron-sulfur (Fe-S) centers, to quinones in the respiratory chain. The immediate electron acceptor for the enzyme in this species is believed to be ubiquinone. Couples the redox reaction to proton translocation (for every two electrons transferred, four hydrogen ions are translocated across the cytoplasmic membrane), and thus conserves the redox energy in a proton gradient.</text>
</comment>
<comment type="catalytic activity">
    <reaction evidence="1">
        <text>a quinone + NADH + 5 H(+)(in) = a quinol + NAD(+) + 4 H(+)(out)</text>
        <dbReference type="Rhea" id="RHEA:57888"/>
        <dbReference type="ChEBI" id="CHEBI:15378"/>
        <dbReference type="ChEBI" id="CHEBI:24646"/>
        <dbReference type="ChEBI" id="CHEBI:57540"/>
        <dbReference type="ChEBI" id="CHEBI:57945"/>
        <dbReference type="ChEBI" id="CHEBI:132124"/>
    </reaction>
</comment>
<comment type="cofactor">
    <cofactor evidence="1">
        <name>[4Fe-4S] cluster</name>
        <dbReference type="ChEBI" id="CHEBI:49883"/>
    </cofactor>
    <text evidence="1">Binds 1 [4Fe-4S] cluster.</text>
</comment>
<comment type="subunit">
    <text evidence="1">NDH-1 is composed of 14 different subunits. Subunits NuoB, C, D, E, F, and G constitute the peripheral sector of the complex.</text>
</comment>
<comment type="subcellular location">
    <subcellularLocation>
        <location evidence="1">Cell inner membrane</location>
        <topology evidence="1">Peripheral membrane protein</topology>
        <orientation evidence="1">Cytoplasmic side</orientation>
    </subcellularLocation>
</comment>
<comment type="similarity">
    <text evidence="1">Belongs to the complex I 20 kDa subunit family.</text>
</comment>
<sequence length="158" mass="17258">MGIGNENKGFITASADALINWVRTGSLWPVTTGLACCAVEMMHAGAARYDLDRFGIVFRPSPRQSDVLIVAGTLCNKMAPALRQVYDQMPDPKWVISMGSCANGGGYYHYSYSVVRGCDRIVPVDIYVPGCPPTAEALVYGIIQLQNKIIRKDTIARK</sequence>